<sequence>MEEEKRWIAVPTWRIPERLERWHSLIKYLKYKTKDLQKVCYVPHFKVGWAWWTCSRVIFPLQEGSHLEVQGYWHLTPERGWLSTYAVRITWYSRNFWTDVTPDYADILLHSTYFPCFTAGEVRRAIRGEQLLSCCKFPRAHRYQVPSLQYLALKVVSDVRSQGENPTWKQWRRDNRRGLRMAKQNSRGDKQRGSKPPTKGADFPGLAKVLGILA</sequence>
<protein>
    <recommendedName>
        <fullName>Virion infectivity factor</fullName>
        <shortName>Vif</shortName>
    </recommendedName>
    <alternativeName>
        <fullName>Q protein</fullName>
    </alternativeName>
    <alternativeName>
        <fullName>SOR protein</fullName>
    </alternativeName>
</protein>
<proteinExistence type="evidence at transcript level"/>
<comment type="function">
    <text evidence="1">Counteracts the innate antiviral activity of APOBEC3G. Forms a complex with host APOBEC3G thus preventing the entry of this lethally hypermutating enzyme into progeny virions. Functions as an adapter molecule, recruiting APOBEC3G to the ubiquitin-proteasome machinery. Targets APOBEC3G for degradation through the assembly with elongin BC complex, CUL5 and RBX1. Binds viral RNA and affects the stability of viral nucleoprotein core. May play a role in viral morphology (By similarity).</text>
</comment>
<comment type="subunit">
    <text evidence="1">Homomultimer; in vitro and presumably in vivo. Interacts with viral Pr55Gag precursor and host APOBEC3G. The interaction between Vif and APOBEC3G is species-specific, which may play a role in restricting the replication of SIV to their host. Forms an E3 ligase complex by interacting with host CUL5 and elongin BC complex (ELOB and ELOC) (By similarity).</text>
</comment>
<comment type="subcellular location">
    <subcellularLocation>
        <location evidence="1">Host cytoplasm</location>
    </subcellularLocation>
    <subcellularLocation>
        <location evidence="1">Host cell membrane</location>
        <topology evidence="1">Peripheral membrane protein</topology>
        <orientation evidence="1">Cytoplasmic side</orientation>
    </subcellularLocation>
    <subcellularLocation>
        <location evidence="1">Virion</location>
    </subcellularLocation>
    <text evidence="1">Seems to colocalize with intermediate filament vimentin. A fraction is associated with the cytoplasmic side of cellular membranes, presumably via the interaction with Pr55Gag precursor (By similarity).</text>
</comment>
<comment type="induction">
    <text>Expressed late during infection in a Rev-dependent manner.</text>
</comment>
<comment type="domain">
    <text evidence="1">The BC-like-box motif mediates the interaction with elongin BC complex.</text>
</comment>
<comment type="domain">
    <text evidence="1">The HCCH motif (H-x(5)-C-x(18)-C-x(5)-H) mediates the interaction with CUL5.</text>
</comment>
<comment type="PTM">
    <text evidence="1">Processed in virion by the viral protease.</text>
</comment>
<comment type="PTM">
    <text evidence="1">Highly phosphorylated on serine and threonine residues.</text>
</comment>
<comment type="PTM">
    <text evidence="1">Polyubiquitinated and degraded by the proteasome in the presence of APOBEC3G.</text>
</comment>
<comment type="miscellaneous">
    <text>Vif-defective viruses show catastrophic failure in reverse transcription due to APOBEC-induced mutations that initiate a DNA base repair pathway and compromise the structural integrity of the ssDNA. In the absence of Vif, the virion is morphologically abnormal.</text>
</comment>
<comment type="miscellaneous">
    <text>This is probably a macaque isolate.</text>
</comment>
<comment type="similarity">
    <text evidence="3">Belongs to the primate lentivirus group Vif protein family.</text>
</comment>
<keyword id="KW-1032">Host cell membrane</keyword>
<keyword id="KW-1035">Host cytoplasm</keyword>
<keyword id="KW-1043">Host membrane</keyword>
<keyword id="KW-0945">Host-virus interaction</keyword>
<keyword id="KW-0472">Membrane</keyword>
<keyword id="KW-0597">Phosphoprotein</keyword>
<keyword id="KW-0832">Ubl conjugation</keyword>
<keyword id="KW-0833">Ubl conjugation pathway</keyword>
<keyword id="KW-0946">Virion</keyword>
<organismHost>
    <name type="scientific">Cercopithecidae</name>
    <name type="common">Old World monkeys</name>
    <dbReference type="NCBI Taxonomy" id="9527"/>
</organismHost>
<accession>P05902</accession>
<reference key="1">
    <citation type="journal article" date="1988" name="Nature">
        <title>Comparison of simian immunodeficiency virus isolates.</title>
        <authorList>
            <person name="Kestler H.W."/>
            <person name="Li Y."/>
            <person name="Naidu Y.M."/>
            <person name="Butler C.V."/>
            <person name="Ochs M.F."/>
            <person name="Jaenel G."/>
            <person name="King N.W."/>
            <person name="Daniel M.D."/>
            <person name="Desrosiers R.C."/>
        </authorList>
    </citation>
    <scope>NUCLEOTIDE SEQUENCE [GENOMIC DNA]</scope>
</reference>
<organism>
    <name type="scientific">Simian immunodeficiency virus (isolate Mm251)</name>
    <name type="common">SIV-mac</name>
    <name type="synonym">Simian immunodeficiency virus rhesus monkey</name>
    <dbReference type="NCBI Taxonomy" id="11734"/>
    <lineage>
        <taxon>Viruses</taxon>
        <taxon>Riboviria</taxon>
        <taxon>Pararnavirae</taxon>
        <taxon>Artverviricota</taxon>
        <taxon>Revtraviricetes</taxon>
        <taxon>Ortervirales</taxon>
        <taxon>Retroviridae</taxon>
        <taxon>Orthoretrovirinae</taxon>
        <taxon>Lentivirus</taxon>
        <taxon>Simian immunodeficiency virus</taxon>
    </lineage>
</organism>
<evidence type="ECO:0000250" key="1"/>
<evidence type="ECO:0000256" key="2">
    <source>
        <dbReference type="SAM" id="MobiDB-lite"/>
    </source>
</evidence>
<evidence type="ECO:0000305" key="3"/>
<gene>
    <name type="primary">vif</name>
</gene>
<feature type="chain" id="PRO_0000085332" description="Virion infectivity factor">
    <location>
        <begin position="1"/>
        <end position="214"/>
    </location>
</feature>
<feature type="region of interest" description="Multimerization" evidence="1">
    <location>
        <begin position="154"/>
        <end position="166"/>
    </location>
</feature>
<feature type="region of interest" description="Disordered" evidence="2">
    <location>
        <begin position="179"/>
        <end position="204"/>
    </location>
</feature>
<feature type="short sequence motif" description="HCCH motif" evidence="1">
    <location>
        <begin position="110"/>
        <end position="141"/>
    </location>
</feature>
<feature type="short sequence motif" description="BC-box-like motif" evidence="1">
    <location>
        <begin position="147"/>
        <end position="156"/>
    </location>
</feature>
<feature type="modified residue" description="Phosphoserine; by host" evidence="1">
    <location>
        <position position="147"/>
    </location>
</feature>
<name>VIF_SIVM2</name>
<dbReference type="EMBL" id="M19499">
    <property type="protein sequence ID" value="AAB59907.1"/>
    <property type="molecule type" value="Genomic_RNA"/>
</dbReference>
<dbReference type="SMR" id="P05902"/>
<dbReference type="Proteomes" id="UP000258290">
    <property type="component" value="Segment"/>
</dbReference>
<dbReference type="GO" id="GO:0030430">
    <property type="term" value="C:host cell cytoplasm"/>
    <property type="evidence" value="ECO:0007669"/>
    <property type="project" value="UniProtKB-SubCell"/>
</dbReference>
<dbReference type="GO" id="GO:0020002">
    <property type="term" value="C:host cell plasma membrane"/>
    <property type="evidence" value="ECO:0007669"/>
    <property type="project" value="UniProtKB-SubCell"/>
</dbReference>
<dbReference type="GO" id="GO:0016020">
    <property type="term" value="C:membrane"/>
    <property type="evidence" value="ECO:0007669"/>
    <property type="project" value="UniProtKB-KW"/>
</dbReference>
<dbReference type="GO" id="GO:0044423">
    <property type="term" value="C:virion component"/>
    <property type="evidence" value="ECO:0007669"/>
    <property type="project" value="UniProtKB-KW"/>
</dbReference>
<dbReference type="GO" id="GO:0019058">
    <property type="term" value="P:viral life cycle"/>
    <property type="evidence" value="ECO:0007669"/>
    <property type="project" value="InterPro"/>
</dbReference>
<dbReference type="InterPro" id="IPR000475">
    <property type="entry name" value="Vif"/>
</dbReference>
<dbReference type="Pfam" id="PF00559">
    <property type="entry name" value="Vif"/>
    <property type="match status" value="1"/>
</dbReference>
<dbReference type="PRINTS" id="PR00349">
    <property type="entry name" value="VIRIONINFFCT"/>
</dbReference>